<dbReference type="EMBL" id="X74878">
    <property type="protein sequence ID" value="CAA52865.1"/>
    <property type="molecule type" value="Genomic_DNA"/>
</dbReference>
<dbReference type="EMBL" id="X74879">
    <property type="protein sequence ID" value="CAA52865.1"/>
    <property type="status" value="JOINED"/>
    <property type="molecule type" value="Genomic_DNA"/>
</dbReference>
<dbReference type="PIR" id="S42722">
    <property type="entry name" value="S42722"/>
</dbReference>
<dbReference type="SMR" id="P51445"/>
<dbReference type="GlyCosmos" id="P51445">
    <property type="glycosylation" value="3 sites, No reported glycans"/>
</dbReference>
<dbReference type="GO" id="GO:0005615">
    <property type="term" value="C:extracellular space"/>
    <property type="evidence" value="ECO:0007669"/>
    <property type="project" value="UniProtKB-KW"/>
</dbReference>
<dbReference type="GO" id="GO:0005125">
    <property type="term" value="F:cytokine activity"/>
    <property type="evidence" value="ECO:0007669"/>
    <property type="project" value="UniProtKB-KW"/>
</dbReference>
<dbReference type="GO" id="GO:0008083">
    <property type="term" value="F:growth factor activity"/>
    <property type="evidence" value="ECO:0007669"/>
    <property type="project" value="UniProtKB-KW"/>
</dbReference>
<dbReference type="GO" id="GO:0005135">
    <property type="term" value="F:interleukin-3 receptor binding"/>
    <property type="evidence" value="ECO:0007669"/>
    <property type="project" value="InterPro"/>
</dbReference>
<dbReference type="GO" id="GO:0006955">
    <property type="term" value="P:immune response"/>
    <property type="evidence" value="ECO:0007669"/>
    <property type="project" value="InterPro"/>
</dbReference>
<dbReference type="Gene3D" id="1.20.1250.10">
    <property type="match status" value="1"/>
</dbReference>
<dbReference type="InterPro" id="IPR009079">
    <property type="entry name" value="4_helix_cytokine-like_core"/>
</dbReference>
<dbReference type="InterPro" id="IPR002183">
    <property type="entry name" value="IL-3"/>
</dbReference>
<dbReference type="PANTHER" id="PTHR48489">
    <property type="entry name" value="INTERLEUKIN-3"/>
    <property type="match status" value="1"/>
</dbReference>
<dbReference type="PANTHER" id="PTHR48489:SF1">
    <property type="entry name" value="INTERLEUKIN-3"/>
    <property type="match status" value="1"/>
</dbReference>
<dbReference type="Pfam" id="PF02059">
    <property type="entry name" value="IL3"/>
    <property type="match status" value="1"/>
</dbReference>
<dbReference type="PIRSF" id="PIRSF001939">
    <property type="entry name" value="IL-3"/>
    <property type="match status" value="1"/>
</dbReference>
<dbReference type="PRINTS" id="PR00430">
    <property type="entry name" value="INTERLEUKIN3"/>
</dbReference>
<dbReference type="SUPFAM" id="SSF47266">
    <property type="entry name" value="4-helical cytokines"/>
    <property type="match status" value="1"/>
</dbReference>
<name>IL3_SAGOE</name>
<reference key="1">
    <citation type="journal article" date="1994" name="Biochim. Biophys. Acta">
        <title>Cloning and expression of interleukin-3 genes of chimpanzee and New World monkeys.</title>
        <authorList>
            <person name="Burger H."/>
            <person name="Mostert M.C."/>
            <person name="Kok E.M."/>
            <person name="Wagemaker G."/>
            <person name="Dorssers L.C.J."/>
        </authorList>
    </citation>
    <scope>NUCLEOTIDE SEQUENCE [GENOMIC DNA]</scope>
</reference>
<reference key="2">
    <citation type="journal article" date="1994" name="J. Mol. Evol.">
        <title>Molecular evolution of interleukin-3.</title>
        <authorList>
            <person name="Burger H."/>
            <person name="Wagemaker G."/>
            <person name="Leunissen J.A.M."/>
            <person name="Dorssers L.C.J."/>
        </authorList>
    </citation>
    <scope>NUCLEOTIDE SEQUENCE [GENOMIC DNA]</scope>
</reference>
<organism>
    <name type="scientific">Saguinus oedipus</name>
    <name type="common">Cotton-top tamarin</name>
    <dbReference type="NCBI Taxonomy" id="9490"/>
    <lineage>
        <taxon>Eukaryota</taxon>
        <taxon>Metazoa</taxon>
        <taxon>Chordata</taxon>
        <taxon>Craniata</taxon>
        <taxon>Vertebrata</taxon>
        <taxon>Euteleostomi</taxon>
        <taxon>Mammalia</taxon>
        <taxon>Eutheria</taxon>
        <taxon>Euarchontoglires</taxon>
        <taxon>Primates</taxon>
        <taxon>Haplorrhini</taxon>
        <taxon>Platyrrhini</taxon>
        <taxon>Cebidae</taxon>
        <taxon>Callitrichinae</taxon>
        <taxon>Saguinus</taxon>
    </lineage>
</organism>
<gene>
    <name type="primary">IL3</name>
</gene>
<protein>
    <recommendedName>
        <fullName>Interleukin-3</fullName>
        <shortName>IL-3</shortName>
    </recommendedName>
    <alternativeName>
        <fullName>Hematopoietic growth factor</fullName>
    </alternativeName>
    <alternativeName>
        <fullName>Mast cell growth factor</fullName>
        <shortName>MCGF</shortName>
    </alternativeName>
    <alternativeName>
        <fullName>Multipotential colony-stimulating factor</fullName>
    </alternativeName>
    <alternativeName>
        <fullName>P-cell-stimulating factor</fullName>
    </alternativeName>
</protein>
<sequence length="142" mass="16085">MSHLPILLLLLLVSPGLQAAPTQTTSLKATQVNCSNLREEIVTLLNQPPLPSSNFNNLNREDQRILMKPNLRRPNLEAFQKAVKSLQNATAIESSLKDLPLCLPMATNASMQHPIRIKDGDWNDFRMKLKFYLKTLEIKQPQ</sequence>
<accession>P51445</accession>
<evidence type="ECO:0000250" key="1"/>
<evidence type="ECO:0000255" key="2"/>
<evidence type="ECO:0000305" key="3"/>
<keyword id="KW-0202">Cytokine</keyword>
<keyword id="KW-1015">Disulfide bond</keyword>
<keyword id="KW-0325">Glycoprotein</keyword>
<keyword id="KW-0339">Growth factor</keyword>
<keyword id="KW-0964">Secreted</keyword>
<keyword id="KW-0732">Signal</keyword>
<comment type="function">
    <text>Granulocyte/macrophage colony-stimulating factors are cytokines that act in hematopoiesis by controlling the production, differentiation, and function of 2 related white cell populations of the blood, the granulocytes and the monocytes-macrophages.</text>
</comment>
<comment type="function">
    <text>This CSF induces granulocytes, macrophages, mast cells, stem cells, erythroid cells, eosinophils and megakaryocytes.</text>
</comment>
<comment type="subunit">
    <text evidence="1">Monomer.</text>
</comment>
<comment type="subcellular location">
    <subcellularLocation>
        <location>Secreted</location>
    </subcellularLocation>
</comment>
<comment type="tissue specificity">
    <text>Activated T-cells, mast cells, natural killer cells.</text>
</comment>
<comment type="similarity">
    <text evidence="3">Belongs to the IL-3 family.</text>
</comment>
<feature type="signal peptide" evidence="1">
    <location>
        <begin position="1"/>
        <end position="18"/>
    </location>
</feature>
<feature type="chain" id="PRO_0000015522" description="Interleukin-3">
    <location>
        <begin position="19"/>
        <end position="142"/>
    </location>
</feature>
<feature type="glycosylation site" description="N-linked (GlcNAc...) asparagine" evidence="2">
    <location>
        <position position="33"/>
    </location>
</feature>
<feature type="glycosylation site" description="N-linked (GlcNAc...) asparagine" evidence="2">
    <location>
        <position position="88"/>
    </location>
</feature>
<feature type="glycosylation site" description="N-linked (GlcNAc...) asparagine" evidence="2">
    <location>
        <position position="108"/>
    </location>
</feature>
<feature type="disulfide bond" evidence="1">
    <location>
        <begin position="34"/>
        <end position="102"/>
    </location>
</feature>
<proteinExistence type="evidence at transcript level"/>